<accession>Q0I1F8</accession>
<gene>
    <name evidence="1" type="primary">murQ</name>
    <name type="ordered locus">HS_0335</name>
</gene>
<feature type="chain" id="PRO_1000009119" description="N-acetylmuramic acid 6-phosphate etherase">
    <location>
        <begin position="1"/>
        <end position="303"/>
    </location>
</feature>
<feature type="domain" description="SIS" evidence="1">
    <location>
        <begin position="62"/>
        <end position="225"/>
    </location>
</feature>
<feature type="active site" description="Proton donor" evidence="1">
    <location>
        <position position="90"/>
    </location>
</feature>
<feature type="active site" evidence="1">
    <location>
        <position position="121"/>
    </location>
</feature>
<reference key="1">
    <citation type="journal article" date="2007" name="J. Bacteriol.">
        <title>Complete genome sequence of Haemophilus somnus (Histophilus somni) strain 129Pt and comparison to Haemophilus ducreyi 35000HP and Haemophilus influenzae Rd.</title>
        <authorList>
            <person name="Challacombe J.F."/>
            <person name="Duncan A.J."/>
            <person name="Brettin T.S."/>
            <person name="Bruce D."/>
            <person name="Chertkov O."/>
            <person name="Detter J.C."/>
            <person name="Han C.S."/>
            <person name="Misra M."/>
            <person name="Richardson P."/>
            <person name="Tapia R."/>
            <person name="Thayer N."/>
            <person name="Xie G."/>
            <person name="Inzana T.J."/>
        </authorList>
    </citation>
    <scope>NUCLEOTIDE SEQUENCE [LARGE SCALE GENOMIC DNA]</scope>
    <source>
        <strain>129Pt</strain>
    </source>
</reference>
<protein>
    <recommendedName>
        <fullName evidence="1">N-acetylmuramic acid 6-phosphate etherase</fullName>
        <shortName evidence="1">MurNAc-6-P etherase</shortName>
        <ecNumber evidence="1">4.2.1.126</ecNumber>
    </recommendedName>
    <alternativeName>
        <fullName evidence="1">N-acetylmuramic acid 6-phosphate hydrolase</fullName>
    </alternativeName>
    <alternativeName>
        <fullName evidence="1">N-acetylmuramic acid 6-phosphate lyase</fullName>
    </alternativeName>
</protein>
<evidence type="ECO:0000255" key="1">
    <source>
        <dbReference type="HAMAP-Rule" id="MF_00068"/>
    </source>
</evidence>
<name>MURQ_HISS1</name>
<sequence>MNKQNLINQFAQLITEQPNPRSVNLDQMSALEIVQLMNKEDQQVPLVIAKALPEIAVVVEKIVAAFRQGGRLVYLGAGTSGRLGVLDASECPPTFGVNHEMVKGIIAGGEQAIRYPVEGAEDNQQAAIVDLQAIQLCSKDILVGIAASGRTPYVISGLKYAKEIGSFTVAIASNPQSAMAKIADMSIETIVGPEILTGSSRLKSGTAQKLVLNMLTTASMVLLGKCYQNFMVDVQASNEKLVDRATRIIMQATGCERAKAEQTLTQADNNAKLAILMILMDLDKQSAVDLLAKNQDKLRQTLD</sequence>
<dbReference type="EC" id="4.2.1.126" evidence="1"/>
<dbReference type="EMBL" id="CP000436">
    <property type="protein sequence ID" value="ABI24613.1"/>
    <property type="molecule type" value="Genomic_DNA"/>
</dbReference>
<dbReference type="SMR" id="Q0I1F8"/>
<dbReference type="KEGG" id="hso:HS_0335"/>
<dbReference type="eggNOG" id="COG2103">
    <property type="taxonomic scope" value="Bacteria"/>
</dbReference>
<dbReference type="HOGENOM" id="CLU_049049_1_1_6"/>
<dbReference type="UniPathway" id="UPA00342"/>
<dbReference type="UniPathway" id="UPA00343"/>
<dbReference type="UniPathway" id="UPA00544"/>
<dbReference type="GO" id="GO:0097367">
    <property type="term" value="F:carbohydrate derivative binding"/>
    <property type="evidence" value="ECO:0007669"/>
    <property type="project" value="InterPro"/>
</dbReference>
<dbReference type="GO" id="GO:0016835">
    <property type="term" value="F:carbon-oxygen lyase activity"/>
    <property type="evidence" value="ECO:0007669"/>
    <property type="project" value="UniProtKB-UniRule"/>
</dbReference>
<dbReference type="GO" id="GO:0016803">
    <property type="term" value="F:ether hydrolase activity"/>
    <property type="evidence" value="ECO:0007669"/>
    <property type="project" value="TreeGrafter"/>
</dbReference>
<dbReference type="GO" id="GO:0097175">
    <property type="term" value="P:1,6-anhydro-N-acetyl-beta-muramic acid catabolic process"/>
    <property type="evidence" value="ECO:0007669"/>
    <property type="project" value="UniProtKB-UniRule"/>
</dbReference>
<dbReference type="GO" id="GO:0046348">
    <property type="term" value="P:amino sugar catabolic process"/>
    <property type="evidence" value="ECO:0007669"/>
    <property type="project" value="InterPro"/>
</dbReference>
<dbReference type="GO" id="GO:0097173">
    <property type="term" value="P:N-acetylmuramic acid catabolic process"/>
    <property type="evidence" value="ECO:0007669"/>
    <property type="project" value="UniProtKB-UniPathway"/>
</dbReference>
<dbReference type="GO" id="GO:0009254">
    <property type="term" value="P:peptidoglycan turnover"/>
    <property type="evidence" value="ECO:0007669"/>
    <property type="project" value="UniProtKB-UniRule"/>
</dbReference>
<dbReference type="CDD" id="cd05007">
    <property type="entry name" value="SIS_Etherase"/>
    <property type="match status" value="1"/>
</dbReference>
<dbReference type="FunFam" id="1.10.8.1080:FF:000001">
    <property type="entry name" value="N-acetylmuramic acid 6-phosphate etherase"/>
    <property type="match status" value="1"/>
</dbReference>
<dbReference type="FunFam" id="3.40.50.10490:FF:000014">
    <property type="entry name" value="N-acetylmuramic acid 6-phosphate etherase"/>
    <property type="match status" value="1"/>
</dbReference>
<dbReference type="Gene3D" id="1.10.8.1080">
    <property type="match status" value="1"/>
</dbReference>
<dbReference type="Gene3D" id="3.40.50.10490">
    <property type="entry name" value="Glucose-6-phosphate isomerase like protein, domain 1"/>
    <property type="match status" value="1"/>
</dbReference>
<dbReference type="HAMAP" id="MF_00068">
    <property type="entry name" value="MurQ"/>
    <property type="match status" value="1"/>
</dbReference>
<dbReference type="InterPro" id="IPR005488">
    <property type="entry name" value="Etherase_MurQ"/>
</dbReference>
<dbReference type="InterPro" id="IPR005486">
    <property type="entry name" value="Glucokinase_regulatory_CS"/>
</dbReference>
<dbReference type="InterPro" id="IPR040190">
    <property type="entry name" value="MURQ/GCKR"/>
</dbReference>
<dbReference type="InterPro" id="IPR001347">
    <property type="entry name" value="SIS_dom"/>
</dbReference>
<dbReference type="InterPro" id="IPR046348">
    <property type="entry name" value="SIS_dom_sf"/>
</dbReference>
<dbReference type="NCBIfam" id="TIGR00274">
    <property type="entry name" value="N-acetylmuramic acid 6-phosphate etherase"/>
    <property type="match status" value="1"/>
</dbReference>
<dbReference type="NCBIfam" id="NF003915">
    <property type="entry name" value="PRK05441.1"/>
    <property type="match status" value="1"/>
</dbReference>
<dbReference type="NCBIfam" id="NF009222">
    <property type="entry name" value="PRK12570.1"/>
    <property type="match status" value="1"/>
</dbReference>
<dbReference type="PANTHER" id="PTHR10088">
    <property type="entry name" value="GLUCOKINASE REGULATORY PROTEIN"/>
    <property type="match status" value="1"/>
</dbReference>
<dbReference type="PANTHER" id="PTHR10088:SF4">
    <property type="entry name" value="GLUCOKINASE REGULATORY PROTEIN"/>
    <property type="match status" value="1"/>
</dbReference>
<dbReference type="Pfam" id="PF20741">
    <property type="entry name" value="GKRP-like_C"/>
    <property type="match status" value="1"/>
</dbReference>
<dbReference type="Pfam" id="PF22645">
    <property type="entry name" value="GKRP_SIS_N"/>
    <property type="match status" value="1"/>
</dbReference>
<dbReference type="SUPFAM" id="SSF53697">
    <property type="entry name" value="SIS domain"/>
    <property type="match status" value="1"/>
</dbReference>
<dbReference type="PROSITE" id="PS01272">
    <property type="entry name" value="GCKR"/>
    <property type="match status" value="1"/>
</dbReference>
<dbReference type="PROSITE" id="PS51464">
    <property type="entry name" value="SIS"/>
    <property type="match status" value="1"/>
</dbReference>
<proteinExistence type="inferred from homology"/>
<keyword id="KW-0119">Carbohydrate metabolism</keyword>
<keyword id="KW-0456">Lyase</keyword>
<comment type="function">
    <text evidence="1">Specifically catalyzes the cleavage of the D-lactyl ether substituent of MurNAc 6-phosphate, producing GlcNAc 6-phosphate and D-lactate. Together with AnmK, is also required for the utilization of anhydro-N-acetylmuramic acid (anhMurNAc) either imported from the medium or derived from its own cell wall murein, and thus plays a role in cell wall recycling.</text>
</comment>
<comment type="catalytic activity">
    <reaction evidence="1">
        <text>N-acetyl-D-muramate 6-phosphate + H2O = N-acetyl-D-glucosamine 6-phosphate + (R)-lactate</text>
        <dbReference type="Rhea" id="RHEA:26410"/>
        <dbReference type="ChEBI" id="CHEBI:15377"/>
        <dbReference type="ChEBI" id="CHEBI:16004"/>
        <dbReference type="ChEBI" id="CHEBI:57513"/>
        <dbReference type="ChEBI" id="CHEBI:58722"/>
        <dbReference type="EC" id="4.2.1.126"/>
    </reaction>
</comment>
<comment type="pathway">
    <text evidence="1">Amino-sugar metabolism; 1,6-anhydro-N-acetylmuramate degradation.</text>
</comment>
<comment type="pathway">
    <text evidence="1">Amino-sugar metabolism; N-acetylmuramate degradation.</text>
</comment>
<comment type="pathway">
    <text evidence="1">Cell wall biogenesis; peptidoglycan recycling.</text>
</comment>
<comment type="subunit">
    <text evidence="1">Homodimer.</text>
</comment>
<comment type="miscellaneous">
    <text evidence="1">A lyase-type mechanism (elimination/hydration) is suggested for the cleavage of the lactyl ether bond of MurNAc 6-phosphate, with the formation of an alpha,beta-unsaturated aldehyde intermediate with (E)-stereochemistry, followed by the syn addition of water to give product.</text>
</comment>
<comment type="similarity">
    <text evidence="1">Belongs to the GCKR-like family. MurNAc-6-P etherase subfamily.</text>
</comment>
<organism>
    <name type="scientific">Histophilus somni (strain 129Pt)</name>
    <name type="common">Haemophilus somnus</name>
    <dbReference type="NCBI Taxonomy" id="205914"/>
    <lineage>
        <taxon>Bacteria</taxon>
        <taxon>Pseudomonadati</taxon>
        <taxon>Pseudomonadota</taxon>
        <taxon>Gammaproteobacteria</taxon>
        <taxon>Pasteurellales</taxon>
        <taxon>Pasteurellaceae</taxon>
        <taxon>Histophilus</taxon>
    </lineage>
</organism>